<evidence type="ECO:0000255" key="1">
    <source>
        <dbReference type="HAMAP-Rule" id="MF_01543"/>
    </source>
</evidence>
<dbReference type="EC" id="6.3.4.3" evidence="1"/>
<dbReference type="EMBL" id="AP006841">
    <property type="protein sequence ID" value="BAD48949.1"/>
    <property type="molecule type" value="Genomic_DNA"/>
</dbReference>
<dbReference type="RefSeq" id="WP_005787533.1">
    <property type="nucleotide sequence ID" value="NC_006347.1"/>
</dbReference>
<dbReference type="RefSeq" id="YP_099483.1">
    <property type="nucleotide sequence ID" value="NC_006347.1"/>
</dbReference>
<dbReference type="SMR" id="Q64U80"/>
<dbReference type="STRING" id="295405.BF2202"/>
<dbReference type="KEGG" id="bfr:BF2202"/>
<dbReference type="PATRIC" id="fig|295405.11.peg.2140"/>
<dbReference type="HOGENOM" id="CLU_003601_3_3_10"/>
<dbReference type="OrthoDB" id="9761733at2"/>
<dbReference type="UniPathway" id="UPA00193"/>
<dbReference type="Proteomes" id="UP000002197">
    <property type="component" value="Chromosome"/>
</dbReference>
<dbReference type="GO" id="GO:0005524">
    <property type="term" value="F:ATP binding"/>
    <property type="evidence" value="ECO:0007669"/>
    <property type="project" value="UniProtKB-UniRule"/>
</dbReference>
<dbReference type="GO" id="GO:0004329">
    <property type="term" value="F:formate-tetrahydrofolate ligase activity"/>
    <property type="evidence" value="ECO:0007669"/>
    <property type="project" value="UniProtKB-UniRule"/>
</dbReference>
<dbReference type="GO" id="GO:0035999">
    <property type="term" value="P:tetrahydrofolate interconversion"/>
    <property type="evidence" value="ECO:0007669"/>
    <property type="project" value="UniProtKB-UniRule"/>
</dbReference>
<dbReference type="CDD" id="cd00477">
    <property type="entry name" value="FTHFS"/>
    <property type="match status" value="1"/>
</dbReference>
<dbReference type="FunFam" id="3.30.1510.10:FF:000001">
    <property type="entry name" value="Formate--tetrahydrofolate ligase"/>
    <property type="match status" value="1"/>
</dbReference>
<dbReference type="Gene3D" id="3.30.1510.10">
    <property type="entry name" value="Domain 2, N(10)-formyltetrahydrofolate synthetase"/>
    <property type="match status" value="1"/>
</dbReference>
<dbReference type="Gene3D" id="3.10.410.10">
    <property type="entry name" value="Formyltetrahydrofolate synthetase, domain 3"/>
    <property type="match status" value="1"/>
</dbReference>
<dbReference type="Gene3D" id="3.40.50.300">
    <property type="entry name" value="P-loop containing nucleotide triphosphate hydrolases"/>
    <property type="match status" value="1"/>
</dbReference>
<dbReference type="HAMAP" id="MF_01543">
    <property type="entry name" value="FTHFS"/>
    <property type="match status" value="1"/>
</dbReference>
<dbReference type="InterPro" id="IPR000559">
    <property type="entry name" value="Formate_THF_ligase"/>
</dbReference>
<dbReference type="InterPro" id="IPR020628">
    <property type="entry name" value="Formate_THF_ligase_CS"/>
</dbReference>
<dbReference type="InterPro" id="IPR027417">
    <property type="entry name" value="P-loop_NTPase"/>
</dbReference>
<dbReference type="NCBIfam" id="NF010030">
    <property type="entry name" value="PRK13505.1"/>
    <property type="match status" value="1"/>
</dbReference>
<dbReference type="Pfam" id="PF01268">
    <property type="entry name" value="FTHFS"/>
    <property type="match status" value="1"/>
</dbReference>
<dbReference type="SUPFAM" id="SSF52540">
    <property type="entry name" value="P-loop containing nucleoside triphosphate hydrolases"/>
    <property type="match status" value="1"/>
</dbReference>
<dbReference type="PROSITE" id="PS00721">
    <property type="entry name" value="FTHFS_1"/>
    <property type="match status" value="1"/>
</dbReference>
<dbReference type="PROSITE" id="PS00722">
    <property type="entry name" value="FTHFS_2"/>
    <property type="match status" value="1"/>
</dbReference>
<accession>Q64U80</accession>
<comment type="catalytic activity">
    <reaction evidence="1">
        <text>(6S)-5,6,7,8-tetrahydrofolate + formate + ATP = (6R)-10-formyltetrahydrofolate + ADP + phosphate</text>
        <dbReference type="Rhea" id="RHEA:20221"/>
        <dbReference type="ChEBI" id="CHEBI:15740"/>
        <dbReference type="ChEBI" id="CHEBI:30616"/>
        <dbReference type="ChEBI" id="CHEBI:43474"/>
        <dbReference type="ChEBI" id="CHEBI:57453"/>
        <dbReference type="ChEBI" id="CHEBI:195366"/>
        <dbReference type="ChEBI" id="CHEBI:456216"/>
        <dbReference type="EC" id="6.3.4.3"/>
    </reaction>
</comment>
<comment type="pathway">
    <text evidence="1">One-carbon metabolism; tetrahydrofolate interconversion.</text>
</comment>
<comment type="similarity">
    <text evidence="1">Belongs to the formate--tetrahydrofolate ligase family.</text>
</comment>
<proteinExistence type="inferred from homology"/>
<protein>
    <recommendedName>
        <fullName evidence="1">Formate--tetrahydrofolate ligase</fullName>
        <ecNumber evidence="1">6.3.4.3</ecNumber>
    </recommendedName>
    <alternativeName>
        <fullName evidence="1">Formyltetrahydrofolate synthetase</fullName>
        <shortName evidence="1">FHS</shortName>
        <shortName evidence="1">FTHFS</shortName>
    </alternativeName>
</protein>
<name>FTHS_BACFR</name>
<sequence length="555" mass="60418">MKSDIEIARSVELKKIKQVAESIGIPRDEVENYGRYIAKIPEYLIDEEKVKKSNLILVTAITATKAGIGKTTVSIGLALGLNKIGKKAIVALREPSLGPCFGMKGGAAGGGYAQVLPMEKINLHFTGDFHAITSAHNMISALLDNYLYQNQSKGFGLKEILWRRVLDVNDRSLRNIVVGLGPKTNGITQESGFDITPASEIMAILCLSKDVDDLRRRIENILLGYTYDNKPFTVKDLGVAGAITVLLKDAIHPNLVQTTEGTAAFVHGGPFANIAHGCNSILATKMAMTFGDYVITEAGFGADLGAEKFYNIKCRKSGLQPRLTVIVATAQGLKMHGGVSLDRIKEPNLEGLREGLRNLDKHVRNLHSFGQTVIVAFNKFASDTDEEMELLREHCEQLGVGYAINNAFSEGGEGAVDLANLVVETIENKPSEPLQFTYNDEDSVQQKIEKVATNLYGASVVTYSTLTRNKIKLIEEMGIGHYPVCIAKTQYSFSADPKVYGAVDNFELHIKDIVINNGAEMIVAIAGEIMRMPGLPKEPQALHIDIVDGNIEGLS</sequence>
<reference key="1">
    <citation type="journal article" date="2004" name="Proc. Natl. Acad. Sci. U.S.A.">
        <title>Genomic analysis of Bacteroides fragilis reveals extensive DNA inversions regulating cell surface adaptation.</title>
        <authorList>
            <person name="Kuwahara T."/>
            <person name="Yamashita A."/>
            <person name="Hirakawa H."/>
            <person name="Nakayama H."/>
            <person name="Toh H."/>
            <person name="Okada N."/>
            <person name="Kuhara S."/>
            <person name="Hattori M."/>
            <person name="Hayashi T."/>
            <person name="Ohnishi Y."/>
        </authorList>
    </citation>
    <scope>NUCLEOTIDE SEQUENCE [LARGE SCALE GENOMIC DNA]</scope>
    <source>
        <strain>YCH46</strain>
    </source>
</reference>
<keyword id="KW-0067">ATP-binding</keyword>
<keyword id="KW-0436">Ligase</keyword>
<keyword id="KW-0547">Nucleotide-binding</keyword>
<keyword id="KW-0554">One-carbon metabolism</keyword>
<gene>
    <name evidence="1" type="primary">fhs</name>
    <name type="ordered locus">BF2202</name>
</gene>
<organism>
    <name type="scientific">Bacteroides fragilis (strain YCH46)</name>
    <dbReference type="NCBI Taxonomy" id="295405"/>
    <lineage>
        <taxon>Bacteria</taxon>
        <taxon>Pseudomonadati</taxon>
        <taxon>Bacteroidota</taxon>
        <taxon>Bacteroidia</taxon>
        <taxon>Bacteroidales</taxon>
        <taxon>Bacteroidaceae</taxon>
        <taxon>Bacteroides</taxon>
    </lineage>
</organism>
<feature type="chain" id="PRO_0000199333" description="Formate--tetrahydrofolate ligase">
    <location>
        <begin position="1"/>
        <end position="555"/>
    </location>
</feature>
<feature type="binding site" evidence="1">
    <location>
        <begin position="64"/>
        <end position="71"/>
    </location>
    <ligand>
        <name>ATP</name>
        <dbReference type="ChEBI" id="CHEBI:30616"/>
    </ligand>
</feature>